<gene>
    <name evidence="1" type="primary">pcm</name>
    <name type="ordered locus">PTH_2678</name>
</gene>
<organism>
    <name type="scientific">Pelotomaculum thermopropionicum (strain DSM 13744 / JCM 10971 / SI)</name>
    <dbReference type="NCBI Taxonomy" id="370438"/>
    <lineage>
        <taxon>Bacteria</taxon>
        <taxon>Bacillati</taxon>
        <taxon>Bacillota</taxon>
        <taxon>Clostridia</taxon>
        <taxon>Eubacteriales</taxon>
        <taxon>Desulfotomaculaceae</taxon>
        <taxon>Pelotomaculum</taxon>
    </lineage>
</organism>
<name>PIMT_PELTS</name>
<sequence>MLLKRAAGKEKDDDNRAGERRRMVYEQLISRGIENDDVIQSMLEVPRHRFVPKHLQEYAYQDGPLAIGEGQTISQPYIVALMIEALEPAPSDRVLEVGTGSGYAAAVLSRIVSVVYTIERFDSLARGARSLFQSLKYDNIYVRTGDGTKGWPEAAPFDGIIVSAGAPAVPQTLCGQLKPGGRLVAPVGDKRWQELLVVRRALDGGYNVKKLGTVFFVPLVGEEGWHDET</sequence>
<reference key="1">
    <citation type="journal article" date="2008" name="Genome Res.">
        <title>The genome of Pelotomaculum thermopropionicum reveals niche-associated evolution in anaerobic microbiota.</title>
        <authorList>
            <person name="Kosaka T."/>
            <person name="Kato S."/>
            <person name="Shimoyama T."/>
            <person name="Ishii S."/>
            <person name="Abe T."/>
            <person name="Watanabe K."/>
        </authorList>
    </citation>
    <scope>NUCLEOTIDE SEQUENCE [LARGE SCALE GENOMIC DNA]</scope>
    <source>
        <strain>DSM 13744 / JCM 10971 / SI</strain>
    </source>
</reference>
<evidence type="ECO:0000255" key="1">
    <source>
        <dbReference type="HAMAP-Rule" id="MF_00090"/>
    </source>
</evidence>
<accession>A5CYQ6</accession>
<keyword id="KW-0963">Cytoplasm</keyword>
<keyword id="KW-0489">Methyltransferase</keyword>
<keyword id="KW-1185">Reference proteome</keyword>
<keyword id="KW-0949">S-adenosyl-L-methionine</keyword>
<keyword id="KW-0808">Transferase</keyword>
<comment type="function">
    <text evidence="1">Catalyzes the methyl esterification of L-isoaspartyl residues in peptides and proteins that result from spontaneous decomposition of normal L-aspartyl and L-asparaginyl residues. It plays a role in the repair and/or degradation of damaged proteins.</text>
</comment>
<comment type="catalytic activity">
    <reaction evidence="1">
        <text>[protein]-L-isoaspartate + S-adenosyl-L-methionine = [protein]-L-isoaspartate alpha-methyl ester + S-adenosyl-L-homocysteine</text>
        <dbReference type="Rhea" id="RHEA:12705"/>
        <dbReference type="Rhea" id="RHEA-COMP:12143"/>
        <dbReference type="Rhea" id="RHEA-COMP:12144"/>
        <dbReference type="ChEBI" id="CHEBI:57856"/>
        <dbReference type="ChEBI" id="CHEBI:59789"/>
        <dbReference type="ChEBI" id="CHEBI:90596"/>
        <dbReference type="ChEBI" id="CHEBI:90598"/>
        <dbReference type="EC" id="2.1.1.77"/>
    </reaction>
</comment>
<comment type="subcellular location">
    <subcellularLocation>
        <location evidence="1">Cytoplasm</location>
    </subcellularLocation>
</comment>
<comment type="similarity">
    <text evidence="1">Belongs to the methyltransferase superfamily. L-isoaspartyl/D-aspartyl protein methyltransferase family.</text>
</comment>
<dbReference type="EC" id="2.1.1.77" evidence="1"/>
<dbReference type="EMBL" id="AP009389">
    <property type="protein sequence ID" value="BAF60859.1"/>
    <property type="molecule type" value="Genomic_DNA"/>
</dbReference>
<dbReference type="SMR" id="A5CYQ6"/>
<dbReference type="STRING" id="370438.PTH_2678"/>
<dbReference type="KEGG" id="pth:PTH_2678"/>
<dbReference type="eggNOG" id="COG2518">
    <property type="taxonomic scope" value="Bacteria"/>
</dbReference>
<dbReference type="HOGENOM" id="CLU_055432_2_0_9"/>
<dbReference type="Proteomes" id="UP000006556">
    <property type="component" value="Chromosome"/>
</dbReference>
<dbReference type="GO" id="GO:0005737">
    <property type="term" value="C:cytoplasm"/>
    <property type="evidence" value="ECO:0007669"/>
    <property type="project" value="UniProtKB-SubCell"/>
</dbReference>
<dbReference type="GO" id="GO:0004719">
    <property type="term" value="F:protein-L-isoaspartate (D-aspartate) O-methyltransferase activity"/>
    <property type="evidence" value="ECO:0007669"/>
    <property type="project" value="UniProtKB-UniRule"/>
</dbReference>
<dbReference type="GO" id="GO:0032259">
    <property type="term" value="P:methylation"/>
    <property type="evidence" value="ECO:0007669"/>
    <property type="project" value="UniProtKB-KW"/>
</dbReference>
<dbReference type="GO" id="GO:0036211">
    <property type="term" value="P:protein modification process"/>
    <property type="evidence" value="ECO:0007669"/>
    <property type="project" value="UniProtKB-UniRule"/>
</dbReference>
<dbReference type="GO" id="GO:0030091">
    <property type="term" value="P:protein repair"/>
    <property type="evidence" value="ECO:0007669"/>
    <property type="project" value="UniProtKB-UniRule"/>
</dbReference>
<dbReference type="CDD" id="cd02440">
    <property type="entry name" value="AdoMet_MTases"/>
    <property type="match status" value="1"/>
</dbReference>
<dbReference type="FunFam" id="3.40.50.150:FF:000010">
    <property type="entry name" value="Protein-L-isoaspartate O-methyltransferase"/>
    <property type="match status" value="1"/>
</dbReference>
<dbReference type="Gene3D" id="3.40.50.150">
    <property type="entry name" value="Vaccinia Virus protein VP39"/>
    <property type="match status" value="1"/>
</dbReference>
<dbReference type="HAMAP" id="MF_00090">
    <property type="entry name" value="PIMT"/>
    <property type="match status" value="1"/>
</dbReference>
<dbReference type="InterPro" id="IPR000682">
    <property type="entry name" value="PCMT"/>
</dbReference>
<dbReference type="InterPro" id="IPR029063">
    <property type="entry name" value="SAM-dependent_MTases_sf"/>
</dbReference>
<dbReference type="NCBIfam" id="TIGR00080">
    <property type="entry name" value="pimt"/>
    <property type="match status" value="1"/>
</dbReference>
<dbReference type="NCBIfam" id="NF001453">
    <property type="entry name" value="PRK00312.1"/>
    <property type="match status" value="1"/>
</dbReference>
<dbReference type="PANTHER" id="PTHR11579">
    <property type="entry name" value="PROTEIN-L-ISOASPARTATE O-METHYLTRANSFERASE"/>
    <property type="match status" value="1"/>
</dbReference>
<dbReference type="PANTHER" id="PTHR11579:SF0">
    <property type="entry name" value="PROTEIN-L-ISOASPARTATE(D-ASPARTATE) O-METHYLTRANSFERASE"/>
    <property type="match status" value="1"/>
</dbReference>
<dbReference type="Pfam" id="PF01135">
    <property type="entry name" value="PCMT"/>
    <property type="match status" value="1"/>
</dbReference>
<dbReference type="SUPFAM" id="SSF53335">
    <property type="entry name" value="S-adenosyl-L-methionine-dependent methyltransferases"/>
    <property type="match status" value="1"/>
</dbReference>
<dbReference type="PROSITE" id="PS01279">
    <property type="entry name" value="PCMT"/>
    <property type="match status" value="1"/>
</dbReference>
<feature type="chain" id="PRO_0000351899" description="Protein-L-isoaspartate O-methyltransferase">
    <location>
        <begin position="1"/>
        <end position="229"/>
    </location>
</feature>
<feature type="active site" evidence="1">
    <location>
        <position position="74"/>
    </location>
</feature>
<protein>
    <recommendedName>
        <fullName evidence="1">Protein-L-isoaspartate O-methyltransferase</fullName>
        <ecNumber evidence="1">2.1.1.77</ecNumber>
    </recommendedName>
    <alternativeName>
        <fullName evidence="1">L-isoaspartyl protein carboxyl methyltransferase</fullName>
    </alternativeName>
    <alternativeName>
        <fullName evidence="1">Protein L-isoaspartyl methyltransferase</fullName>
    </alternativeName>
    <alternativeName>
        <fullName evidence="1">Protein-beta-aspartate methyltransferase</fullName>
        <shortName evidence="1">PIMT</shortName>
    </alternativeName>
</protein>
<proteinExistence type="inferred from homology"/>